<gene>
    <name type="primary">lprA</name>
    <name type="ordered locus">BQ2027_MB1301C</name>
</gene>
<proteinExistence type="inferred from homology"/>
<dbReference type="EMBL" id="LT708304">
    <property type="protein sequence ID" value="SIT99904.1"/>
    <property type="molecule type" value="Genomic_DNA"/>
</dbReference>
<dbReference type="RefSeq" id="NP_854955.1">
    <property type="nucleotide sequence ID" value="NC_002945.3"/>
</dbReference>
<dbReference type="RefSeq" id="WP_010950515.1">
    <property type="nucleotide sequence ID" value="NC_002945.4"/>
</dbReference>
<dbReference type="SMR" id="Q7U094"/>
<dbReference type="KEGG" id="mbo:BQ2027_MB1301C"/>
<dbReference type="PATRIC" id="fig|233413.5.peg.1426"/>
<dbReference type="Proteomes" id="UP000001419">
    <property type="component" value="Chromosome"/>
</dbReference>
<dbReference type="GO" id="GO:0005886">
    <property type="term" value="C:plasma membrane"/>
    <property type="evidence" value="ECO:0007669"/>
    <property type="project" value="UniProtKB-SubCell"/>
</dbReference>
<dbReference type="CDD" id="cd16334">
    <property type="entry name" value="LppX-like"/>
    <property type="match status" value="1"/>
</dbReference>
<dbReference type="FunFam" id="2.50.20.20:FF:000003">
    <property type="entry name" value="Lipoprotein LprA"/>
    <property type="match status" value="1"/>
</dbReference>
<dbReference type="Gene3D" id="2.50.20.20">
    <property type="match status" value="1"/>
</dbReference>
<dbReference type="InterPro" id="IPR029046">
    <property type="entry name" value="LolA/LolB/LppX"/>
</dbReference>
<dbReference type="InterPro" id="IPR009830">
    <property type="entry name" value="LppX/LprAFG"/>
</dbReference>
<dbReference type="Pfam" id="PF07161">
    <property type="entry name" value="LppX_LprAFG"/>
    <property type="match status" value="1"/>
</dbReference>
<dbReference type="SUPFAM" id="SSF89392">
    <property type="entry name" value="Prokaryotic lipoproteins and lipoprotein localization factors"/>
    <property type="match status" value="1"/>
</dbReference>
<dbReference type="PROSITE" id="PS51257">
    <property type="entry name" value="PROKAR_LIPOPROTEIN"/>
    <property type="match status" value="1"/>
</dbReference>
<name>LPRA_MYCBO</name>
<keyword id="KW-1003">Cell membrane</keyword>
<keyword id="KW-0449">Lipoprotein</keyword>
<keyword id="KW-0472">Membrane</keyword>
<keyword id="KW-0564">Palmitate</keyword>
<keyword id="KW-1185">Reference proteome</keyword>
<keyword id="KW-0732">Signal</keyword>
<organism>
    <name type="scientific">Mycobacterium bovis (strain ATCC BAA-935 / AF2122/97)</name>
    <dbReference type="NCBI Taxonomy" id="233413"/>
    <lineage>
        <taxon>Bacteria</taxon>
        <taxon>Bacillati</taxon>
        <taxon>Actinomycetota</taxon>
        <taxon>Actinomycetes</taxon>
        <taxon>Mycobacteriales</taxon>
        <taxon>Mycobacteriaceae</taxon>
        <taxon>Mycobacterium</taxon>
        <taxon>Mycobacterium tuberculosis complex</taxon>
    </lineage>
</organism>
<protein>
    <recommendedName>
        <fullName>Putative lipoprotein LprA</fullName>
    </recommendedName>
</protein>
<sequence>MKHPPCSVVAAATAILAVVLAIGGCSTEGDAGKASDTAATASNGDAAMLLKQATDAMRKVTGMHVRLAVTGDVPNLRVTKLEGDISNTPQTVATGSATLLVGNKSEDAKFVYVDGHLYSDLGQPGTYTDFGNGTSIYNVSVLLDPNKGLANLLANLKDASVAGSQQADGVATTKITGNSSADDIATLAGSRLTSEDVKTVPTTVWIASDGSSHLVQIQIAPTKDTSVTLTMSDWGKQVTATKPV</sequence>
<comment type="subcellular location">
    <subcellularLocation>
        <location evidence="1">Cell membrane</location>
        <topology evidence="1">Lipid-anchor</topology>
    </subcellularLocation>
</comment>
<comment type="similarity">
    <text evidence="2">Belongs to the LppX/LprAFG lipoprotein family.</text>
</comment>
<accession>Q7U094</accession>
<accession>A0A1R3XXV9</accession>
<accession>X2BHL0</accession>
<reference key="1">
    <citation type="journal article" date="2003" name="Proc. Natl. Acad. Sci. U.S.A.">
        <title>The complete genome sequence of Mycobacterium bovis.</title>
        <authorList>
            <person name="Garnier T."/>
            <person name="Eiglmeier K."/>
            <person name="Camus J.-C."/>
            <person name="Medina N."/>
            <person name="Mansoor H."/>
            <person name="Pryor M."/>
            <person name="Duthoy S."/>
            <person name="Grondin S."/>
            <person name="Lacroix C."/>
            <person name="Monsempe C."/>
            <person name="Simon S."/>
            <person name="Harris B."/>
            <person name="Atkin R."/>
            <person name="Doggett J."/>
            <person name="Mayes R."/>
            <person name="Keating L."/>
            <person name="Wheeler P.R."/>
            <person name="Parkhill J."/>
            <person name="Barrell B.G."/>
            <person name="Cole S.T."/>
            <person name="Gordon S.V."/>
            <person name="Hewinson R.G."/>
        </authorList>
    </citation>
    <scope>NUCLEOTIDE SEQUENCE [LARGE SCALE GENOMIC DNA]</scope>
    <source>
        <strain>ATCC BAA-935 / AF2122/97</strain>
    </source>
</reference>
<reference key="2">
    <citation type="journal article" date="2017" name="Genome Announc.">
        <title>Updated reference genome sequence and annotation of Mycobacterium bovis AF2122/97.</title>
        <authorList>
            <person name="Malone K.M."/>
            <person name="Farrell D."/>
            <person name="Stuber T.P."/>
            <person name="Schubert O.T."/>
            <person name="Aebersold R."/>
            <person name="Robbe-Austerman S."/>
            <person name="Gordon S.V."/>
        </authorList>
    </citation>
    <scope>NUCLEOTIDE SEQUENCE [LARGE SCALE GENOMIC DNA]</scope>
    <scope>GENOME REANNOTATION</scope>
    <source>
        <strain>ATCC BAA-935 / AF2122/97</strain>
    </source>
</reference>
<feature type="signal peptide" evidence="1">
    <location>
        <begin position="1"/>
        <end position="24"/>
    </location>
</feature>
<feature type="chain" id="PRO_0000018134" description="Putative lipoprotein LprA">
    <location>
        <begin position="25"/>
        <end position="244"/>
    </location>
</feature>
<feature type="lipid moiety-binding region" description="N-palmitoyl cysteine" evidence="1">
    <location>
        <position position="25"/>
    </location>
</feature>
<feature type="lipid moiety-binding region" description="S-diacylglycerol cysteine" evidence="1">
    <location>
        <position position="25"/>
    </location>
</feature>
<evidence type="ECO:0000255" key="1">
    <source>
        <dbReference type="PROSITE-ProRule" id="PRU00303"/>
    </source>
</evidence>
<evidence type="ECO:0000305" key="2"/>